<organism>
    <name type="scientific">Arabidopsis thaliana</name>
    <name type="common">Mouse-ear cress</name>
    <dbReference type="NCBI Taxonomy" id="3702"/>
    <lineage>
        <taxon>Eukaryota</taxon>
        <taxon>Viridiplantae</taxon>
        <taxon>Streptophyta</taxon>
        <taxon>Embryophyta</taxon>
        <taxon>Tracheophyta</taxon>
        <taxon>Spermatophyta</taxon>
        <taxon>Magnoliopsida</taxon>
        <taxon>eudicotyledons</taxon>
        <taxon>Gunneridae</taxon>
        <taxon>Pentapetalae</taxon>
        <taxon>rosids</taxon>
        <taxon>malvids</taxon>
        <taxon>Brassicales</taxon>
        <taxon>Brassicaceae</taxon>
        <taxon>Camelineae</taxon>
        <taxon>Arabidopsis</taxon>
    </lineage>
</organism>
<gene>
    <name type="ordered locus">At1g09680</name>
    <name type="ORF">F21M12.7</name>
</gene>
<comment type="similarity">
    <text evidence="1">Belongs to the PPR family. P subfamily.</text>
</comment>
<comment type="online information" name="Pentatricopeptide repeat proteins">
    <link uri="https://ppr.plantenergy.uwa.edu.au"/>
</comment>
<reference key="1">
    <citation type="journal article" date="2000" name="Nature">
        <title>Sequence and analysis of chromosome 1 of the plant Arabidopsis thaliana.</title>
        <authorList>
            <person name="Theologis A."/>
            <person name="Ecker J.R."/>
            <person name="Palm C.J."/>
            <person name="Federspiel N.A."/>
            <person name="Kaul S."/>
            <person name="White O."/>
            <person name="Alonso J."/>
            <person name="Altafi H."/>
            <person name="Araujo R."/>
            <person name="Bowman C.L."/>
            <person name="Brooks S.Y."/>
            <person name="Buehler E."/>
            <person name="Chan A."/>
            <person name="Chao Q."/>
            <person name="Chen H."/>
            <person name="Cheuk R.F."/>
            <person name="Chin C.W."/>
            <person name="Chung M.K."/>
            <person name="Conn L."/>
            <person name="Conway A.B."/>
            <person name="Conway A.R."/>
            <person name="Creasy T.H."/>
            <person name="Dewar K."/>
            <person name="Dunn P."/>
            <person name="Etgu P."/>
            <person name="Feldblyum T.V."/>
            <person name="Feng J.-D."/>
            <person name="Fong B."/>
            <person name="Fujii C.Y."/>
            <person name="Gill J.E."/>
            <person name="Goldsmith A.D."/>
            <person name="Haas B."/>
            <person name="Hansen N.F."/>
            <person name="Hughes B."/>
            <person name="Huizar L."/>
            <person name="Hunter J.L."/>
            <person name="Jenkins J."/>
            <person name="Johnson-Hopson C."/>
            <person name="Khan S."/>
            <person name="Khaykin E."/>
            <person name="Kim C.J."/>
            <person name="Koo H.L."/>
            <person name="Kremenetskaia I."/>
            <person name="Kurtz D.B."/>
            <person name="Kwan A."/>
            <person name="Lam B."/>
            <person name="Langin-Hooper S."/>
            <person name="Lee A."/>
            <person name="Lee J.M."/>
            <person name="Lenz C.A."/>
            <person name="Li J.H."/>
            <person name="Li Y.-P."/>
            <person name="Lin X."/>
            <person name="Liu S.X."/>
            <person name="Liu Z.A."/>
            <person name="Luros J.S."/>
            <person name="Maiti R."/>
            <person name="Marziali A."/>
            <person name="Militscher J."/>
            <person name="Miranda M."/>
            <person name="Nguyen M."/>
            <person name="Nierman W.C."/>
            <person name="Osborne B.I."/>
            <person name="Pai G."/>
            <person name="Peterson J."/>
            <person name="Pham P.K."/>
            <person name="Rizzo M."/>
            <person name="Rooney T."/>
            <person name="Rowley D."/>
            <person name="Sakano H."/>
            <person name="Salzberg S.L."/>
            <person name="Schwartz J.R."/>
            <person name="Shinn P."/>
            <person name="Southwick A.M."/>
            <person name="Sun H."/>
            <person name="Tallon L.J."/>
            <person name="Tambunga G."/>
            <person name="Toriumi M.J."/>
            <person name="Town C.D."/>
            <person name="Utterback T."/>
            <person name="Van Aken S."/>
            <person name="Vaysberg M."/>
            <person name="Vysotskaia V.S."/>
            <person name="Walker M."/>
            <person name="Wu D."/>
            <person name="Yu G."/>
            <person name="Fraser C.M."/>
            <person name="Venter J.C."/>
            <person name="Davis R.W."/>
        </authorList>
    </citation>
    <scope>NUCLEOTIDE SEQUENCE [LARGE SCALE GENOMIC DNA]</scope>
    <source>
        <strain>cv. Columbia</strain>
    </source>
</reference>
<reference key="2">
    <citation type="journal article" date="2017" name="Plant J.">
        <title>Araport11: a complete reannotation of the Arabidopsis thaliana reference genome.</title>
        <authorList>
            <person name="Cheng C.Y."/>
            <person name="Krishnakumar V."/>
            <person name="Chan A.P."/>
            <person name="Thibaud-Nissen F."/>
            <person name="Schobel S."/>
            <person name="Town C.D."/>
        </authorList>
    </citation>
    <scope>GENOME REANNOTATION</scope>
    <source>
        <strain>cv. Columbia</strain>
    </source>
</reference>
<reference key="3">
    <citation type="journal article" date="2004" name="Plant Cell">
        <title>Genome-wide analysis of Arabidopsis pentatricopeptide repeat proteins reveals their essential role in organelle biogenesis.</title>
        <authorList>
            <person name="Lurin C."/>
            <person name="Andres C."/>
            <person name="Aubourg S."/>
            <person name="Bellaoui M."/>
            <person name="Bitton F."/>
            <person name="Bruyere C."/>
            <person name="Caboche M."/>
            <person name="Debast C."/>
            <person name="Gualberto J."/>
            <person name="Hoffmann B."/>
            <person name="Lecharny A."/>
            <person name="Le Ret M."/>
            <person name="Martin-Magniette M.-L."/>
            <person name="Mireau H."/>
            <person name="Peeters N."/>
            <person name="Renou J.-P."/>
            <person name="Szurek B."/>
            <person name="Taconnat L."/>
            <person name="Small I."/>
        </authorList>
    </citation>
    <scope>GENE FAMILY</scope>
</reference>
<name>PPR26_ARATH</name>
<feature type="chain" id="PRO_0000342767" description="Putative pentatricopeptide repeat-containing protein At1g09680">
    <location>
        <begin position="1"/>
        <end position="607"/>
    </location>
</feature>
<feature type="repeat" description="PPR 1">
    <location>
        <begin position="239"/>
        <end position="273"/>
    </location>
</feature>
<feature type="repeat" description="PPR 2">
    <location>
        <begin position="274"/>
        <end position="308"/>
    </location>
</feature>
<feature type="repeat" description="PPR 3">
    <location>
        <begin position="309"/>
        <end position="343"/>
    </location>
</feature>
<feature type="repeat" description="PPR 4">
    <location>
        <begin position="344"/>
        <end position="378"/>
    </location>
</feature>
<feature type="repeat" description="PPR 5">
    <location>
        <begin position="379"/>
        <end position="413"/>
    </location>
</feature>
<feature type="repeat" description="PPR 6">
    <location>
        <begin position="414"/>
        <end position="448"/>
    </location>
</feature>
<feature type="repeat" description="PPR 7">
    <location>
        <begin position="449"/>
        <end position="483"/>
    </location>
</feature>
<feature type="repeat" description="PPR 8">
    <location>
        <begin position="484"/>
        <end position="518"/>
    </location>
</feature>
<feature type="repeat" description="PPR 9">
    <location>
        <begin position="519"/>
        <end position="553"/>
    </location>
</feature>
<sequence length="607" mass="68547">MFRIEILRCTLSQSHPQRFSRASFLLSTWYSQESVSAADNDDDPVLVKLSVAIRDSYKDPPLEFSSFTDCPSIRKVLPSLSVHHVVDLINHNPLSLPQRSIFAFFKFISSQPGFRFTVETYFVLARFLAVHEMFTEAQSLIELVVSRKGKNSASSVFISLVEMRVTPMCGFLVDALMITYTDLGFIPDAIQCFRLSRKHRFDVPIRGCGNLLDRMMKLNPTGTIWGFYMEILDAGFPLNVYVFNILMNKFCKEGNISDAQKVFDEITKRSLQPTVVSFNTLINGYCKVGNLDEGFRLKHQMEKSRTRPDVFTYSALINALCKENKMDGAHGLFDEMCKRGLIPNDVIFTTLIHGHSRNGEIDLMKESYQKMLSKGLQPDIVLYNTLVNGFCKNGDLVAARNIVDGMIRRGLRPDKITYTTLIDGFCRGGDVETALEIRKEMDQNGIELDRVGFSALVCGMCKEGRVIDAERALREMLRAGIKPDDVTYTMMMDAFCKKGDAQTGFKLLKEMQSDGHVPSVVTYNVLLNGLCKLGQMKNADMLLDAMLNIGVVPDDITYNTLLEGHHRHANSSKRYIQKPEIGIVADLASYKSIVNELDRASKDHRNR</sequence>
<evidence type="ECO:0000305" key="1"/>
<protein>
    <recommendedName>
        <fullName>Putative pentatricopeptide repeat-containing protein At1g09680</fullName>
    </recommendedName>
</protein>
<dbReference type="EMBL" id="AC000132">
    <property type="protein sequence ID" value="AAB60724.1"/>
    <property type="molecule type" value="Genomic_DNA"/>
</dbReference>
<dbReference type="EMBL" id="CP002684">
    <property type="protein sequence ID" value="AEE28479.1"/>
    <property type="molecule type" value="Genomic_DNA"/>
</dbReference>
<dbReference type="PIR" id="F86230">
    <property type="entry name" value="F86230"/>
</dbReference>
<dbReference type="RefSeq" id="NP_172439.1">
    <property type="nucleotide sequence ID" value="NM_100840.2"/>
</dbReference>
<dbReference type="SMR" id="O04491"/>
<dbReference type="FunCoup" id="O04491">
    <property type="interactions" value="20"/>
</dbReference>
<dbReference type="STRING" id="3702.O04491"/>
<dbReference type="PaxDb" id="3702-AT1G09680.1"/>
<dbReference type="ProteomicsDB" id="236655"/>
<dbReference type="EnsemblPlants" id="AT1G09680.1">
    <property type="protein sequence ID" value="AT1G09680.1"/>
    <property type="gene ID" value="AT1G09680"/>
</dbReference>
<dbReference type="GeneID" id="837496"/>
<dbReference type="Gramene" id="AT1G09680.1">
    <property type="protein sequence ID" value="AT1G09680.1"/>
    <property type="gene ID" value="AT1G09680"/>
</dbReference>
<dbReference type="KEGG" id="ath:AT1G09680"/>
<dbReference type="Araport" id="AT1G09680"/>
<dbReference type="TAIR" id="AT1G09680"/>
<dbReference type="eggNOG" id="KOG4197">
    <property type="taxonomic scope" value="Eukaryota"/>
</dbReference>
<dbReference type="HOGENOM" id="CLU_002706_49_12_1"/>
<dbReference type="InParanoid" id="O04491"/>
<dbReference type="OMA" id="VPDAIQC"/>
<dbReference type="PhylomeDB" id="O04491"/>
<dbReference type="PRO" id="PR:O04491"/>
<dbReference type="Proteomes" id="UP000006548">
    <property type="component" value="Chromosome 1"/>
</dbReference>
<dbReference type="ExpressionAtlas" id="O04491">
    <property type="expression patterns" value="baseline and differential"/>
</dbReference>
<dbReference type="GO" id="GO:0005739">
    <property type="term" value="C:mitochondrion"/>
    <property type="evidence" value="ECO:0007005"/>
    <property type="project" value="TAIR"/>
</dbReference>
<dbReference type="Gene3D" id="1.25.40.10">
    <property type="entry name" value="Tetratricopeptide repeat domain"/>
    <property type="match status" value="4"/>
</dbReference>
<dbReference type="InterPro" id="IPR002885">
    <property type="entry name" value="Pentatricopeptide_rpt"/>
</dbReference>
<dbReference type="InterPro" id="IPR011990">
    <property type="entry name" value="TPR-like_helical_dom_sf"/>
</dbReference>
<dbReference type="NCBIfam" id="TIGR00756">
    <property type="entry name" value="PPR"/>
    <property type="match status" value="9"/>
</dbReference>
<dbReference type="PANTHER" id="PTHR47447">
    <property type="entry name" value="OS03G0856100 PROTEIN"/>
    <property type="match status" value="1"/>
</dbReference>
<dbReference type="PANTHER" id="PTHR47447:SF22">
    <property type="entry name" value="TETRATRICOPEPTIDE-LIKE HELICAL DOMAIN SUPERFAMILY"/>
    <property type="match status" value="1"/>
</dbReference>
<dbReference type="Pfam" id="PF01535">
    <property type="entry name" value="PPR"/>
    <property type="match status" value="1"/>
</dbReference>
<dbReference type="Pfam" id="PF12854">
    <property type="entry name" value="PPR_1"/>
    <property type="match status" value="2"/>
</dbReference>
<dbReference type="Pfam" id="PF13041">
    <property type="entry name" value="PPR_2"/>
    <property type="match status" value="3"/>
</dbReference>
<dbReference type="PROSITE" id="PS51375">
    <property type="entry name" value="PPR"/>
    <property type="match status" value="9"/>
</dbReference>
<accession>O04491</accession>
<keyword id="KW-1185">Reference proteome</keyword>
<keyword id="KW-0677">Repeat</keyword>
<proteinExistence type="inferred from homology"/>